<comment type="function">
    <text evidence="1 2 5">With EpmB is involved in the beta-lysylation step of the post-translational modification of translation elongation factor P (EF-P) on 'Lys-34'. Catalyzes the ATP-dependent activation of (R)-beta-lysine produced by EpmB, forming a lysyl-adenylate, from which the beta-lysyl moiety is then transferred to the epsilon-amino group of EF-P 'Lys-34' (Probable). Can also use L-alpha-lysine as a substrate, but probably with lower efficiency. Cannot aminoacylate tRNA(Lys) with lysine.</text>
</comment>
<comment type="catalytic activity">
    <reaction evidence="6">
        <text>D-beta-lysine + L-lysyl-[protein] + ATP = N(6)-((3R)-3,6-diaminohexanoyl)-L-lysyl-[protein] + AMP + diphosphate + H(+)</text>
        <dbReference type="Rhea" id="RHEA:83435"/>
        <dbReference type="Rhea" id="RHEA-COMP:9752"/>
        <dbReference type="Rhea" id="RHEA-COMP:20131"/>
        <dbReference type="ChEBI" id="CHEBI:15378"/>
        <dbReference type="ChEBI" id="CHEBI:29969"/>
        <dbReference type="ChEBI" id="CHEBI:30616"/>
        <dbReference type="ChEBI" id="CHEBI:33019"/>
        <dbReference type="ChEBI" id="CHEBI:84138"/>
        <dbReference type="ChEBI" id="CHEBI:156053"/>
        <dbReference type="ChEBI" id="CHEBI:456215"/>
    </reaction>
    <physiologicalReaction direction="left-to-right" evidence="6">
        <dbReference type="Rhea" id="RHEA:83436"/>
    </physiologicalReaction>
</comment>
<comment type="subunit">
    <text evidence="1 2">Homodimer.</text>
</comment>
<comment type="disruption phenotype">
    <text evidence="2 3">Mutants have a reduced pyruvate oxidase activity and a reduced growth rate, and are highly attenuated for virulence in mouse models of infection. Salmonella epmA and epmB mutants share extensive phenotypic pleiotropy, including an increased ability to respire under nutrient-limiting conditions, hypersusceptibility to a variety of diverse growth inhibitors, and altered expression of multiple proteins, including several encoded on the SPI-1 pathogenicity island.</text>
</comment>
<comment type="similarity">
    <text evidence="1">Belongs to the class-II aminoacyl-tRNA synthetase family. EpmA subfamily.</text>
</comment>
<gene>
    <name evidence="1" type="primary">epmA</name>
    <name type="synonym">genX</name>
    <name evidence="4" type="synonym">poxA</name>
    <name type="synonym">yjeA</name>
    <name type="ordered locus">STM4344</name>
</gene>
<sequence length="325" mass="36856">MSETATWQPSASIPNLLKRAAIMAEIRRFFADRGVLEVETPCMSQATVTDIHLFPFETRFVGPGHSQGINLYLMTSPEYHMKRLLAAGCGPVFQLCRSFRNEEMGRHHNPEFTMLEWYRPHYDMYRLMNEVDDLLQQVLDCQPAESLSYQQAFQRHLEIDPLSADKTQLREAAAKLDLSNIADTEEDRDTLLQLLFTMGVEPHIGKEKPTFIYHFPASQASLAQISTEDHRVAERFEVYYKGIELANGFHELTDAREQQQRFEQDNRKRAARGLPQQPIDQNLLDALAAGLPDCSGVALGVDRLVMLALGAESLADVIAFTVDRA</sequence>
<proteinExistence type="evidence at protein level"/>
<name>EPMA_SALTY</name>
<feature type="chain" id="PRO_0000152728" description="Elongation factor P--(R)-beta-lysine ligase">
    <location>
        <begin position="1"/>
        <end position="325"/>
    </location>
</feature>
<feature type="binding site" evidence="1">
    <location>
        <begin position="76"/>
        <end position="78"/>
    </location>
    <ligand>
        <name>substrate</name>
    </ligand>
</feature>
<feature type="binding site">
    <location>
        <begin position="100"/>
        <end position="102"/>
    </location>
    <ligand>
        <name>ATP</name>
        <dbReference type="ChEBI" id="CHEBI:30616"/>
    </ligand>
</feature>
<feature type="binding site">
    <location>
        <position position="109"/>
    </location>
    <ligand>
        <name>ATP</name>
        <dbReference type="ChEBI" id="CHEBI:30616"/>
    </ligand>
</feature>
<feature type="binding site" evidence="1">
    <location>
        <position position="118"/>
    </location>
    <ligand>
        <name>substrate</name>
    </ligand>
</feature>
<feature type="binding site">
    <location>
        <begin position="244"/>
        <end position="245"/>
    </location>
    <ligand>
        <name>ATP</name>
        <dbReference type="ChEBI" id="CHEBI:30616"/>
    </ligand>
</feature>
<feature type="binding site" evidence="1">
    <location>
        <position position="251"/>
    </location>
    <ligand>
        <name>substrate</name>
    </ligand>
</feature>
<feature type="binding site" evidence="1">
    <location>
        <position position="300"/>
    </location>
    <ligand>
        <name>ATP</name>
        <dbReference type="ChEBI" id="CHEBI:30616"/>
    </ligand>
</feature>
<feature type="mutagenesis site" description="Partial loss of activity." evidence="2">
    <original>S</original>
    <variation>A</variation>
    <location>
        <position position="76"/>
    </location>
</feature>
<feature type="mutagenesis site" description="Loss of activity." evidence="2">
    <original>E</original>
    <variation>A</variation>
    <location>
        <position position="78"/>
    </location>
</feature>
<feature type="mutagenesis site" description="Loss of activity." evidence="2">
    <original>R</original>
    <variation>A</variation>
    <location>
        <position position="100"/>
    </location>
</feature>
<feature type="mutagenesis site" description="No effect on activity." evidence="2">
    <original>E</original>
    <variation>A</variation>
    <location>
        <position position="102"/>
    </location>
</feature>
<feature type="mutagenesis site" description="No effect on activity." evidence="2">
    <original>H</original>
    <variation>A</variation>
    <location>
        <position position="108"/>
    </location>
</feature>
<feature type="mutagenesis site" description="Partial loss of activity." evidence="2">
    <original>F</original>
    <variation>A</variation>
    <location>
        <position position="112"/>
    </location>
</feature>
<feature type="mutagenesis site" description="Loss of activity." evidence="2">
    <original>E</original>
    <variation>A</variation>
    <location>
        <position position="116"/>
    </location>
</feature>
<feature type="mutagenesis site" description="No effect on activity." evidence="2">
    <original>Y</original>
    <variation>A</variation>
    <location>
        <position position="118"/>
    </location>
</feature>
<feature type="mutagenesis site" description="Loss of activity." evidence="2">
    <original>E</original>
    <variation>A</variation>
    <location>
        <position position="244"/>
    </location>
</feature>
<feature type="mutagenesis site" description="Loss of activity." evidence="2">
    <original>R</original>
    <variation>A</variation>
    <location>
        <position position="303"/>
    </location>
</feature>
<feature type="sequence conflict" description="In Ref. 1; AAC82540." evidence="5" ref="1">
    <original>A</original>
    <variation>G</variation>
    <location>
        <position position="31"/>
    </location>
</feature>
<feature type="sequence conflict" description="In Ref. 1; AAC82540." evidence="5" ref="1">
    <original>A</original>
    <variation>E</variation>
    <location>
        <position position="86"/>
    </location>
</feature>
<feature type="sequence conflict" description="In Ref. 1; AAC82540." evidence="5" ref="1">
    <original>E</original>
    <variation>G</variation>
    <location>
        <position position="158"/>
    </location>
</feature>
<feature type="sequence conflict" description="In Ref. 1; AAC82540." evidence="5" ref="1">
    <original>P</original>
    <variation>A</variation>
    <location>
        <position position="275"/>
    </location>
</feature>
<feature type="sequence conflict" description="In Ref. 1; AAC82540." evidence="5" ref="1">
    <original>I</original>
    <variation>M</variation>
    <location>
        <position position="279"/>
    </location>
</feature>
<feature type="helix" evidence="7">
    <location>
        <begin position="13"/>
        <end position="32"/>
    </location>
</feature>
<feature type="strand" evidence="7">
    <location>
        <begin position="42"/>
        <end position="46"/>
    </location>
</feature>
<feature type="strand" evidence="7">
    <location>
        <begin position="57"/>
        <end position="60"/>
    </location>
</feature>
<feature type="strand" evidence="7">
    <location>
        <begin position="69"/>
        <end position="73"/>
    </location>
</feature>
<feature type="helix" evidence="7">
    <location>
        <begin position="78"/>
        <end position="87"/>
    </location>
</feature>
<feature type="strand" evidence="7">
    <location>
        <begin position="91"/>
        <end position="99"/>
    </location>
</feature>
<feature type="strand" evidence="7">
    <location>
        <begin position="110"/>
        <end position="120"/>
    </location>
</feature>
<feature type="helix" evidence="7">
    <location>
        <begin position="124"/>
        <end position="139"/>
    </location>
</feature>
<feature type="strand" evidence="7">
    <location>
        <begin position="145"/>
        <end position="148"/>
    </location>
</feature>
<feature type="helix" evidence="7">
    <location>
        <begin position="149"/>
        <end position="157"/>
    </location>
</feature>
<feature type="turn" evidence="7">
    <location>
        <begin position="161"/>
        <end position="163"/>
    </location>
</feature>
<feature type="helix" evidence="7">
    <location>
        <begin position="166"/>
        <end position="175"/>
    </location>
</feature>
<feature type="helix" evidence="7">
    <location>
        <begin position="179"/>
        <end position="184"/>
    </location>
</feature>
<feature type="helix" evidence="7">
    <location>
        <begin position="188"/>
        <end position="199"/>
    </location>
</feature>
<feature type="helix" evidence="7">
    <location>
        <begin position="201"/>
        <end position="203"/>
    </location>
</feature>
<feature type="strand" evidence="7">
    <location>
        <begin position="204"/>
        <end position="208"/>
    </location>
</feature>
<feature type="strand" evidence="7">
    <location>
        <begin position="210"/>
        <end position="213"/>
    </location>
</feature>
<feature type="helix" evidence="7">
    <location>
        <begin position="217"/>
        <end position="219"/>
    </location>
</feature>
<feature type="strand" evidence="7">
    <location>
        <begin position="232"/>
        <end position="240"/>
    </location>
</feature>
<feature type="strand" evidence="7">
    <location>
        <begin position="243"/>
        <end position="251"/>
    </location>
</feature>
<feature type="helix" evidence="7">
    <location>
        <begin position="255"/>
        <end position="271"/>
    </location>
</feature>
<feature type="helix" evidence="7">
    <location>
        <begin position="281"/>
        <end position="289"/>
    </location>
</feature>
<feature type="strand" evidence="7">
    <location>
        <begin position="294"/>
        <end position="300"/>
    </location>
</feature>
<feature type="helix" evidence="7">
    <location>
        <begin position="301"/>
        <end position="309"/>
    </location>
</feature>
<feature type="helix" evidence="7">
    <location>
        <begin position="314"/>
        <end position="316"/>
    </location>
</feature>
<feature type="strand" evidence="7">
    <location>
        <begin position="318"/>
        <end position="320"/>
    </location>
</feature>
<feature type="turn" evidence="7">
    <location>
        <begin position="322"/>
        <end position="324"/>
    </location>
</feature>
<dbReference type="EC" id="6.3.2.-" evidence="1 6"/>
<dbReference type="EMBL" id="AF001831">
    <property type="protein sequence ID" value="AAC82540.1"/>
    <property type="molecule type" value="Genomic_DNA"/>
</dbReference>
<dbReference type="EMBL" id="AE006468">
    <property type="protein sequence ID" value="AAL23167.1"/>
    <property type="molecule type" value="Genomic_DNA"/>
</dbReference>
<dbReference type="RefSeq" id="NP_463208.1">
    <property type="nucleotide sequence ID" value="NC_003197.2"/>
</dbReference>
<dbReference type="RefSeq" id="WP_000004794.1">
    <property type="nucleotide sequence ID" value="NC_003197.2"/>
</dbReference>
<dbReference type="PDB" id="3G1Z">
    <property type="method" value="X-ray"/>
    <property type="resolution" value="1.95 A"/>
    <property type="chains" value="A/B=1-325"/>
</dbReference>
<dbReference type="PDBsum" id="3G1Z"/>
<dbReference type="SMR" id="Q9ZJ12"/>
<dbReference type="STRING" id="99287.STM4344"/>
<dbReference type="PaxDb" id="99287-STM4344"/>
<dbReference type="GeneID" id="1255870"/>
<dbReference type="KEGG" id="stm:STM4344"/>
<dbReference type="PATRIC" id="fig|99287.12.peg.4571"/>
<dbReference type="HOGENOM" id="CLU_008255_1_1_6"/>
<dbReference type="OMA" id="EWYRPGF"/>
<dbReference type="PhylomeDB" id="Q9ZJ12"/>
<dbReference type="EvolutionaryTrace" id="Q9ZJ12"/>
<dbReference type="Proteomes" id="UP000001014">
    <property type="component" value="Chromosome"/>
</dbReference>
<dbReference type="GO" id="GO:0005737">
    <property type="term" value="C:cytoplasm"/>
    <property type="evidence" value="ECO:0000318"/>
    <property type="project" value="GO_Central"/>
</dbReference>
<dbReference type="GO" id="GO:0016880">
    <property type="term" value="F:acid-ammonia (or amide) ligase activity"/>
    <property type="evidence" value="ECO:0007669"/>
    <property type="project" value="UniProtKB-UniRule"/>
</dbReference>
<dbReference type="GO" id="GO:0005524">
    <property type="term" value="F:ATP binding"/>
    <property type="evidence" value="ECO:0007669"/>
    <property type="project" value="UniProtKB-UniRule"/>
</dbReference>
<dbReference type="GO" id="GO:0004824">
    <property type="term" value="F:lysine-tRNA ligase activity"/>
    <property type="evidence" value="ECO:0000318"/>
    <property type="project" value="GO_Central"/>
</dbReference>
<dbReference type="GO" id="GO:0000049">
    <property type="term" value="F:tRNA binding"/>
    <property type="evidence" value="ECO:0000318"/>
    <property type="project" value="GO_Central"/>
</dbReference>
<dbReference type="GO" id="GO:0006430">
    <property type="term" value="P:lysyl-tRNA aminoacylation"/>
    <property type="evidence" value="ECO:0000318"/>
    <property type="project" value="GO_Central"/>
</dbReference>
<dbReference type="FunFam" id="3.30.930.10:FF:000017">
    <property type="entry name" value="Elongation factor P--(R)-beta-lysine ligase"/>
    <property type="match status" value="1"/>
</dbReference>
<dbReference type="Gene3D" id="3.30.930.10">
    <property type="entry name" value="Bira Bifunctional Protein, Domain 2"/>
    <property type="match status" value="1"/>
</dbReference>
<dbReference type="HAMAP" id="MF_00174">
    <property type="entry name" value="EF_P_modif_A"/>
    <property type="match status" value="1"/>
</dbReference>
<dbReference type="InterPro" id="IPR004364">
    <property type="entry name" value="Aa-tRNA-synt_II"/>
</dbReference>
<dbReference type="InterPro" id="IPR006195">
    <property type="entry name" value="aa-tRNA-synth_II"/>
</dbReference>
<dbReference type="InterPro" id="IPR045864">
    <property type="entry name" value="aa-tRNA-synth_II/BPL/LPL"/>
</dbReference>
<dbReference type="InterPro" id="IPR004525">
    <property type="entry name" value="EpmA"/>
</dbReference>
<dbReference type="InterPro" id="IPR018149">
    <property type="entry name" value="Lys-tRNA-synth_II_C"/>
</dbReference>
<dbReference type="NCBIfam" id="TIGR00462">
    <property type="entry name" value="genX"/>
    <property type="match status" value="1"/>
</dbReference>
<dbReference type="NCBIfam" id="NF006828">
    <property type="entry name" value="PRK09350.1"/>
    <property type="match status" value="1"/>
</dbReference>
<dbReference type="PANTHER" id="PTHR42918:SF6">
    <property type="entry name" value="ELONGATION FACTOR P--(R)-BETA-LYSINE LIGASE"/>
    <property type="match status" value="1"/>
</dbReference>
<dbReference type="PANTHER" id="PTHR42918">
    <property type="entry name" value="LYSYL-TRNA SYNTHETASE"/>
    <property type="match status" value="1"/>
</dbReference>
<dbReference type="Pfam" id="PF00152">
    <property type="entry name" value="tRNA-synt_2"/>
    <property type="match status" value="1"/>
</dbReference>
<dbReference type="PRINTS" id="PR00982">
    <property type="entry name" value="TRNASYNTHLYS"/>
</dbReference>
<dbReference type="SUPFAM" id="SSF55681">
    <property type="entry name" value="Class II aaRS and biotin synthetases"/>
    <property type="match status" value="1"/>
</dbReference>
<dbReference type="PROSITE" id="PS50862">
    <property type="entry name" value="AA_TRNA_LIGASE_II"/>
    <property type="match status" value="1"/>
</dbReference>
<keyword id="KW-0002">3D-structure</keyword>
<keyword id="KW-0067">ATP-binding</keyword>
<keyword id="KW-0436">Ligase</keyword>
<keyword id="KW-0547">Nucleotide-binding</keyword>
<keyword id="KW-1185">Reference proteome</keyword>
<protein>
    <recommendedName>
        <fullName evidence="1">Elongation factor P--(R)-beta-lysine ligase</fullName>
        <shortName evidence="1">EF-P--(R)-beta-lysine ligase</shortName>
        <ecNumber evidence="1 6">6.3.2.-</ecNumber>
    </recommendedName>
    <alternativeName>
        <fullName evidence="1">EF-P post-translational modification enzyme A</fullName>
    </alternativeName>
    <alternativeName>
        <fullName evidence="1">EF-P-lysine lysyltransferase</fullName>
    </alternativeName>
</protein>
<organism>
    <name type="scientific">Salmonella typhimurium (strain LT2 / SGSC1412 / ATCC 700720)</name>
    <dbReference type="NCBI Taxonomy" id="99287"/>
    <lineage>
        <taxon>Bacteria</taxon>
        <taxon>Pseudomonadati</taxon>
        <taxon>Pseudomonadota</taxon>
        <taxon>Gammaproteobacteria</taxon>
        <taxon>Enterobacterales</taxon>
        <taxon>Enterobacteriaceae</taxon>
        <taxon>Salmonella</taxon>
    </lineage>
</organism>
<accession>Q9ZJ12</accession>
<reference key="1">
    <citation type="journal article" date="1998" name="Infect. Immun.">
        <title>Molecular and functional characterization of Salmonella enterica serovar typhimurium poxA gene: effect on attenuation of virulence and protection.</title>
        <authorList>
            <person name="Kaniga K."/>
            <person name="Compton M.S."/>
            <person name="Curtiss R. III"/>
            <person name="Sundaram P."/>
        </authorList>
    </citation>
    <scope>NUCLEOTIDE SEQUENCE [GENOMIC DNA]</scope>
    <scope>DISRUPTION PHENOTYPE</scope>
    <source>
        <strain>UK-1</strain>
    </source>
</reference>
<reference key="2">
    <citation type="journal article" date="2001" name="Nature">
        <title>Complete genome sequence of Salmonella enterica serovar Typhimurium LT2.</title>
        <authorList>
            <person name="McClelland M."/>
            <person name="Sanderson K.E."/>
            <person name="Spieth J."/>
            <person name="Clifton S.W."/>
            <person name="Latreille P."/>
            <person name="Courtney L."/>
            <person name="Porwollik S."/>
            <person name="Ali J."/>
            <person name="Dante M."/>
            <person name="Du F."/>
            <person name="Hou S."/>
            <person name="Layman D."/>
            <person name="Leonard S."/>
            <person name="Nguyen C."/>
            <person name="Scott K."/>
            <person name="Holmes A."/>
            <person name="Grewal N."/>
            <person name="Mulvaney E."/>
            <person name="Ryan E."/>
            <person name="Sun H."/>
            <person name="Florea L."/>
            <person name="Miller W."/>
            <person name="Stoneking T."/>
            <person name="Nhan M."/>
            <person name="Waterston R."/>
            <person name="Wilson R.K."/>
        </authorList>
    </citation>
    <scope>NUCLEOTIDE SEQUENCE [LARGE SCALE GENOMIC DNA]</scope>
    <source>
        <strain>LT2 / SGSC1412 / ATCC 700720</strain>
    </source>
</reference>
<reference key="3">
    <citation type="journal article" date="2010" name="Mol. Cell">
        <title>PoxA, YjeK, and elongation factor P coordinately modulate virulence and drug resistance in Salmonella enterica.</title>
        <authorList>
            <person name="Navarre W.W."/>
            <person name="Zou S.B."/>
            <person name="Roy H."/>
            <person name="Xie J.L."/>
            <person name="Savchenko A."/>
            <person name="Singer A."/>
            <person name="Edvokimova E."/>
            <person name="Prost L.R."/>
            <person name="Kumar R."/>
            <person name="Ibba M."/>
            <person name="Fang F.C."/>
        </authorList>
    </citation>
    <scope>X-RAY CRYSTALLOGRAPHY (1.95 ANGSTROMS) IN COMPLEX WITH AMP AND PHOSPHATE</scope>
    <scope>FUNCTION IN EF-P MODIFICATION</scope>
    <scope>LYSYLATION ACTIVITY</scope>
    <scope>SUBUNIT</scope>
    <scope>DISRUPTION PHENOTYPE</scope>
    <scope>MUTAGENESIS OF SER-76; GLU-78; ARG-100; GLU-102; HIS-108; PHE-112; GLU-116; TYR-118; GLU-244 AND ARG-303</scope>
    <source>
        <strain>14028s / SGSC 2262</strain>
        <strain>LT2 / SGSC1412 / ATCC 700720</strain>
    </source>
</reference>
<evidence type="ECO:0000255" key="1">
    <source>
        <dbReference type="HAMAP-Rule" id="MF_00174"/>
    </source>
</evidence>
<evidence type="ECO:0000269" key="2">
    <source>
    </source>
</evidence>
<evidence type="ECO:0000269" key="3">
    <source>
    </source>
</evidence>
<evidence type="ECO:0000303" key="4">
    <source>
    </source>
</evidence>
<evidence type="ECO:0000305" key="5"/>
<evidence type="ECO:0000305" key="6">
    <source>
    </source>
</evidence>
<evidence type="ECO:0007829" key="7">
    <source>
        <dbReference type="PDB" id="3G1Z"/>
    </source>
</evidence>